<sequence>MVSIAFYGGIPGGISTPITQQSEKSKCEENTMFQPYCYNNDSKNSMAESKEARDQEMNLKEESKEEKRRNDWWKIGMFLLCLAGTTGGILWWYEGLPQQHYIGLVAIGGRLNGSGQSNAIECWGSFPGCRPFQNYFSYETNRSIHMNNNTATLLEAYHREITFIYKSSCTDSDHCQEYQCKKVNLNSSDSSNSVRVEDVTNTAEYWGFKWLECNQTENFKTILVPENEMVNINDTDTWIPKGCNETWARVKRCPIDILYGIHPIRLCVQPPFFLVQEKGIADTSRIGNCGPTIFLGVLEDNKGVVRGDYTACNVRRLNINRKDYTGMYQVPIFYTCTFTNITSCNSEPIISVIMYETNQVQYLLCNNNNSNNYNCVVQSFGVIGQAHLELPRPNKRIRNQSFNQYNCSINNKTELETWKLVNTSGITPLPISSEANTGLIRHKRDFGISAIVAAIVAATAIARSATMSYVALTEVNKIMEVQNHTFEVENSTLNGMDLIERQIKILYAMILQTHADVQLLKERQQVEETFNLIGCIERTHVFCHTGHPWNMSWGHLNESTQWDDWVSKMEDLNQEILTTLHGARNNLAQSMITFNTPDSIAQFGKDLWSHIGNWIPGLGASIIKYIVMFLLIYLLLTSSPKILRALWKVTSGAGSSGGRYLKKKFHHKHASREDTWDQAQHNIHLAGVTGGSGDKYYKQKYSRNDWNGESEEYNRRPKSWVKSIEAFGESYISEKTKGEISQPGAAINEHKNGSGGNNPHQGSLDLEIRSEGGNIYDCCIKAQEGTLAIPCCGFPLWLFWGLVIIVGRIAGYGLRGLAVIIRICIRGLNLIFEIIRKMLDYIGRALNPGTSHVSMPQYV</sequence>
<name>ENV_EIAV1</name>
<keyword id="KW-0165">Cleavage on pair of basic residues</keyword>
<keyword id="KW-0175">Coiled coil</keyword>
<keyword id="KW-1015">Disulfide bond</keyword>
<keyword id="KW-0325">Glycoprotein</keyword>
<keyword id="KW-1032">Host cell membrane</keyword>
<keyword id="KW-1043">Host membrane</keyword>
<keyword id="KW-0945">Host-virus interaction</keyword>
<keyword id="KW-0472">Membrane</keyword>
<keyword id="KW-0812">Transmembrane</keyword>
<keyword id="KW-1133">Transmembrane helix</keyword>
<keyword id="KW-1161">Viral attachment to host cell</keyword>
<keyword id="KW-0261">Viral envelope protein</keyword>
<keyword id="KW-0946">Virion</keyword>
<keyword id="KW-1160">Virus entry into host cell</keyword>
<accession>P22427</accession>
<gene>
    <name type="primary">env</name>
</gene>
<dbReference type="EMBL" id="M18385">
    <property type="protein sequence ID" value="AAA66407.1"/>
    <property type="molecule type" value="Genomic_RNA"/>
</dbReference>
<dbReference type="PIR" id="A34027">
    <property type="entry name" value="VCLJE1"/>
</dbReference>
<dbReference type="GlyCosmos" id="P22427">
    <property type="glycosylation" value="18 sites, No reported glycans"/>
</dbReference>
<dbReference type="GO" id="GO:0020002">
    <property type="term" value="C:host cell plasma membrane"/>
    <property type="evidence" value="ECO:0007669"/>
    <property type="project" value="UniProtKB-SubCell"/>
</dbReference>
<dbReference type="GO" id="GO:0016020">
    <property type="term" value="C:membrane"/>
    <property type="evidence" value="ECO:0007669"/>
    <property type="project" value="UniProtKB-KW"/>
</dbReference>
<dbReference type="GO" id="GO:0019031">
    <property type="term" value="C:viral envelope"/>
    <property type="evidence" value="ECO:0007669"/>
    <property type="project" value="UniProtKB-KW"/>
</dbReference>
<dbReference type="GO" id="GO:0055036">
    <property type="term" value="C:virion membrane"/>
    <property type="evidence" value="ECO:0007669"/>
    <property type="project" value="UniProtKB-SubCell"/>
</dbReference>
<dbReference type="GO" id="GO:0005198">
    <property type="term" value="F:structural molecule activity"/>
    <property type="evidence" value="ECO:0007669"/>
    <property type="project" value="InterPro"/>
</dbReference>
<dbReference type="GO" id="GO:0046718">
    <property type="term" value="P:symbiont entry into host cell"/>
    <property type="evidence" value="ECO:0007669"/>
    <property type="project" value="UniProtKB-KW"/>
</dbReference>
<dbReference type="GO" id="GO:0019062">
    <property type="term" value="P:virion attachment to host cell"/>
    <property type="evidence" value="ECO:0007669"/>
    <property type="project" value="UniProtKB-KW"/>
</dbReference>
<dbReference type="CDD" id="cd09909">
    <property type="entry name" value="HIV-1-like_HR1-HR2"/>
    <property type="match status" value="1"/>
</dbReference>
<dbReference type="InterPro" id="IPR000328">
    <property type="entry name" value="GP41-like"/>
</dbReference>
<dbReference type="InterPro" id="IPR001361">
    <property type="entry name" value="Gp90_EIAV"/>
</dbReference>
<dbReference type="Pfam" id="PF00971">
    <property type="entry name" value="EIAV_GP90"/>
    <property type="match status" value="1"/>
</dbReference>
<dbReference type="Pfam" id="PF00517">
    <property type="entry name" value="GP41"/>
    <property type="match status" value="1"/>
</dbReference>
<organismHost>
    <name type="scientific">Equus asinus</name>
    <name type="common">Donkey</name>
    <name type="synonym">Equus africanus asinus</name>
    <dbReference type="NCBI Taxonomy" id="9793"/>
</organismHost>
<organismHost>
    <name type="scientific">Equus caballus</name>
    <name type="common">Horse</name>
    <dbReference type="NCBI Taxonomy" id="9796"/>
</organismHost>
<proteinExistence type="inferred from homology"/>
<evidence type="ECO:0000250" key="1"/>
<evidence type="ECO:0000255" key="2"/>
<comment type="function">
    <text evidence="1">The surface protein (SU) attaches the virus to the host cell by binding to its receptor. This interaction triggers the refolding of the transmembrane protein (TM) and is thought to activate its fusogenic potential by unmasking its fusion peptide. Fusion occurs at the host cell plasma membrane (By similarity).</text>
</comment>
<comment type="function">
    <text evidence="1">The transmembrane protein (TM) acts as a class I viral fusion protein. Under the current model, the protein has at least 3 conformational states: pre-fusion native state, pre-hairpin intermediate state, and post-fusion hairpin state. During viral and target cell membrane fusion, the coiled coil regions (heptad repeats) assume a trimer-of-hairpins structure, positioning the fusion peptide in close proximity to the C-terminal region of the ectodomain. The formation of this structure appears to drive apposition and subsequent fusion of viral and target cell membranes. Membranes fusion leads to delivery of the nucleocapsid into the cytoplasm (By similarity).</text>
</comment>
<comment type="subunit">
    <text evidence="1">The mature envelope protein (Env) consists of a trimer of SU-TM heterodimers attached by noncovalent interactions or by a labile interchain disulfide bond.</text>
</comment>
<comment type="subcellular location">
    <molecule>Transmembrane protein</molecule>
    <subcellularLocation>
        <location evidence="1">Virion membrane</location>
        <topology evidence="1">Single-pass type I membrane protein</topology>
    </subcellularLocation>
    <subcellularLocation>
        <location evidence="1">Host cell membrane</location>
        <topology evidence="1">Single-pass type I membrane protein</topology>
    </subcellularLocation>
    <text evidence="1">It is probably concentrated at the site of budding and incorporated into the virions possibly by contacts between the cytoplasmic tail of Env and the N-terminus of Gag.</text>
</comment>
<comment type="subcellular location">
    <molecule>Surface protein</molecule>
    <subcellularLocation>
        <location evidence="1">Virion membrane</location>
        <topology evidence="1">Peripheral membrane protein</topology>
    </subcellularLocation>
    <subcellularLocation>
        <location evidence="1">Host cell membrane</location>
        <topology evidence="1">Peripheral membrane protein</topology>
    </subcellularLocation>
    <text evidence="1">The surface protein is not anchored to the viral envelope, but associates with the extravirion surface through its binding to TM. It is probably concentrated at the site of budding and incorporated into the virions possibly by contacts between the cytoplasmic tail of Env and the N-terminus of Gag (By similarity).</text>
</comment>
<comment type="PTM">
    <text evidence="1">Specific enzymatic cleavages in vivo yield mature proteins. Envelope glycoproteins are synthesized as an inactive precursor that is N-glycosylated and processed likely by host cell furin or by a furin-like protease in the Golgi to yield the mature SU and TM proteins. The cleavage site between SU and TM requires the minimal sequence [KR]-X-[KR]-R (By similarity).</text>
</comment>
<organism>
    <name type="scientific">Equine infectious anemia virus (isolate P3.2-1)</name>
    <name type="common">EIAV</name>
    <dbReference type="NCBI Taxonomy" id="11666"/>
    <lineage>
        <taxon>Viruses</taxon>
        <taxon>Riboviria</taxon>
        <taxon>Pararnavirae</taxon>
        <taxon>Artverviricota</taxon>
        <taxon>Revtraviricetes</taxon>
        <taxon>Ortervirales</taxon>
        <taxon>Retroviridae</taxon>
        <taxon>Orthoretrovirinae</taxon>
        <taxon>Lentivirus</taxon>
        <taxon>Equine infectious anemia virus</taxon>
    </lineage>
</organism>
<feature type="propeptide" id="PRO_0000239527" evidence="1">
    <location>
        <begin position="1"/>
        <end position="6"/>
    </location>
</feature>
<feature type="chain" id="PRO_0000038702" description="Envelope glycoprotein">
    <location>
        <begin position="7"/>
        <end position="859"/>
    </location>
</feature>
<feature type="chain" id="PRO_0000038703" description="Surface protein" evidence="1">
    <location>
        <begin position="7"/>
        <end position="444"/>
    </location>
</feature>
<feature type="chain" id="PRO_0000038704" description="Transmembrane protein" evidence="1">
    <location>
        <begin position="445"/>
        <end position="859"/>
    </location>
</feature>
<feature type="topological domain" description="Extracellular" evidence="2">
    <location>
        <begin position="7"/>
        <end position="614"/>
    </location>
</feature>
<feature type="transmembrane region" description="Helical" evidence="2">
    <location>
        <begin position="615"/>
        <end position="635"/>
    </location>
</feature>
<feature type="topological domain" description="Cytoplasmic" evidence="2">
    <location>
        <begin position="636"/>
        <end position="859"/>
    </location>
</feature>
<feature type="region of interest" description="Fusion peptide" evidence="2">
    <location>
        <begin position="446"/>
        <end position="466"/>
    </location>
</feature>
<feature type="region of interest" description="Immunosuppression" evidence="1">
    <location>
        <begin position="498"/>
        <end position="513"/>
    </location>
</feature>
<feature type="coiled-coil region" evidence="2">
    <location>
        <begin position="576"/>
        <end position="624"/>
    </location>
</feature>
<feature type="coiled-coil region" evidence="2">
    <location>
        <begin position="663"/>
        <end position="699"/>
    </location>
</feature>
<feature type="site" description="Cleavage; by host" evidence="1">
    <location>
        <begin position="444"/>
        <end position="445"/>
    </location>
</feature>
<feature type="site" description="Cleavage" evidence="1">
    <location>
        <begin position="684"/>
        <end position="685"/>
    </location>
</feature>
<feature type="glycosylation site" description="N-linked (GlcNAc...) asparagine; by host" evidence="2">
    <location>
        <position position="40"/>
    </location>
</feature>
<feature type="glycosylation site" description="N-linked (GlcNAc...) asparagine; by host" evidence="2">
    <location>
        <position position="112"/>
    </location>
</feature>
<feature type="glycosylation site" description="N-linked (GlcNAc...) asparagine; by host" evidence="2">
    <location>
        <position position="141"/>
    </location>
</feature>
<feature type="glycosylation site" description="N-linked (GlcNAc...) asparagine; by host" evidence="2">
    <location>
        <position position="148"/>
    </location>
</feature>
<feature type="glycosylation site" description="N-linked (GlcNAc...) asparagine; by host" evidence="2">
    <location>
        <position position="186"/>
    </location>
</feature>
<feature type="glycosylation site" description="N-linked (GlcNAc...) asparagine; by host" evidence="2">
    <location>
        <position position="214"/>
    </location>
</feature>
<feature type="glycosylation site" description="N-linked (GlcNAc...) asparagine; by host" evidence="2">
    <location>
        <position position="233"/>
    </location>
</feature>
<feature type="glycosylation site" description="N-linked (GlcNAc...) asparagine; by host" evidence="2">
    <location>
        <position position="244"/>
    </location>
</feature>
<feature type="glycosylation site" description="N-linked (GlcNAc...) asparagine; by host" evidence="2">
    <location>
        <position position="340"/>
    </location>
</feature>
<feature type="glycosylation site" description="N-linked (GlcNAc...) asparagine; by host" evidence="2">
    <location>
        <position position="368"/>
    </location>
</feature>
<feature type="glycosylation site" description="N-linked (GlcNAc...) asparagine; by host" evidence="2">
    <location>
        <position position="399"/>
    </location>
</feature>
<feature type="glycosylation site" description="N-linked (GlcNAc...) asparagine; by host" evidence="2">
    <location>
        <position position="406"/>
    </location>
</feature>
<feature type="glycosylation site" description="N-linked (GlcNAc...) asparagine; by host" evidence="2">
    <location>
        <position position="411"/>
    </location>
</feature>
<feature type="glycosylation site" description="N-linked (GlcNAc...) asparagine; by host" evidence="2">
    <location>
        <position position="422"/>
    </location>
</feature>
<feature type="glycosylation site" description="N-linked (GlcNAc...) asparagine; by host" evidence="2">
    <location>
        <position position="483"/>
    </location>
</feature>
<feature type="glycosylation site" description="N-linked (GlcNAc...) asparagine; by host" evidence="2">
    <location>
        <position position="490"/>
    </location>
</feature>
<feature type="glycosylation site" description="N-linked (GlcNAc...) asparagine; by host" evidence="2">
    <location>
        <position position="550"/>
    </location>
</feature>
<feature type="glycosylation site" description="N-linked (GlcNAc...) asparagine; by host" evidence="2">
    <location>
        <position position="557"/>
    </location>
</feature>
<reference key="1">
    <citation type="journal article" date="1987" name="Virology">
        <title>Antigenic variation and lentivirus persistence: variations in envelope gene sequences during EIAV infection resemble changes reported for sequential isolates of HIV.</title>
        <authorList>
            <person name="Payne S.L."/>
            <person name="Fang F.D."/>
            <person name="Liu C.P."/>
            <person name="Dhruva B.R."/>
            <person name="Rwambo P."/>
            <person name="Issel C.J."/>
            <person name="Montelaro R.C."/>
        </authorList>
    </citation>
    <scope>NUCLEOTIDE SEQUENCE [GENOMIC RNA]</scope>
</reference>
<protein>
    <recommendedName>
        <fullName>Envelope glycoprotein</fullName>
    </recommendedName>
    <alternativeName>
        <fullName>Env polyprotein</fullName>
    </alternativeName>
    <component>
        <recommendedName>
            <fullName>Surface protein</fullName>
            <shortName>SU</shortName>
        </recommendedName>
        <alternativeName>
            <fullName>Glycoprotein 90</fullName>
            <shortName>gp90</shortName>
        </alternativeName>
    </component>
    <component>
        <recommendedName>
            <fullName>Transmembrane protein</fullName>
            <shortName>TM</shortName>
        </recommendedName>
        <alternativeName>
            <fullName>Glycoprotein 45</fullName>
            <shortName>gp45</shortName>
        </alternativeName>
    </component>
</protein>